<dbReference type="EMBL" id="L35765">
    <property type="protein sequence ID" value="AAA73897.1"/>
    <property type="status" value="ALT_INIT"/>
    <property type="molecule type" value="mRNA"/>
</dbReference>
<dbReference type="RefSeq" id="NP_999158.1">
    <property type="nucleotide sequence ID" value="NM_213993.1"/>
</dbReference>
<dbReference type="SMR" id="Q29053"/>
<dbReference type="FunCoup" id="Q29053">
    <property type="interactions" value="166"/>
</dbReference>
<dbReference type="STRING" id="9823.ENSSSCP00000012500"/>
<dbReference type="GlyCosmos" id="Q29053">
    <property type="glycosylation" value="2 sites, No reported glycans"/>
</dbReference>
<dbReference type="GlyGen" id="Q29053">
    <property type="glycosylation" value="2 sites"/>
</dbReference>
<dbReference type="PaxDb" id="9823-ENSSSCP00000012500"/>
<dbReference type="GeneID" id="397053"/>
<dbReference type="KEGG" id="ssc:397053"/>
<dbReference type="CTD" id="3592"/>
<dbReference type="eggNOG" id="ENOG502S8JN">
    <property type="taxonomic scope" value="Eukaryota"/>
</dbReference>
<dbReference type="InParanoid" id="Q29053"/>
<dbReference type="OMA" id="TMNESCL"/>
<dbReference type="OrthoDB" id="9893660at2759"/>
<dbReference type="TreeFam" id="TF330814"/>
<dbReference type="Proteomes" id="UP000008227">
    <property type="component" value="Unplaced"/>
</dbReference>
<dbReference type="Proteomes" id="UP000314985">
    <property type="component" value="Unplaced"/>
</dbReference>
<dbReference type="Proteomes" id="UP000694570">
    <property type="component" value="Unplaced"/>
</dbReference>
<dbReference type="Proteomes" id="UP000694571">
    <property type="component" value="Unplaced"/>
</dbReference>
<dbReference type="Proteomes" id="UP000694720">
    <property type="component" value="Unplaced"/>
</dbReference>
<dbReference type="Proteomes" id="UP000694722">
    <property type="component" value="Unplaced"/>
</dbReference>
<dbReference type="Proteomes" id="UP000694723">
    <property type="component" value="Unplaced"/>
</dbReference>
<dbReference type="Proteomes" id="UP000694724">
    <property type="component" value="Unplaced"/>
</dbReference>
<dbReference type="Proteomes" id="UP000694725">
    <property type="component" value="Unplaced"/>
</dbReference>
<dbReference type="Proteomes" id="UP000694726">
    <property type="component" value="Unplaced"/>
</dbReference>
<dbReference type="Proteomes" id="UP000694727">
    <property type="component" value="Unplaced"/>
</dbReference>
<dbReference type="Proteomes" id="UP000694728">
    <property type="component" value="Unplaced"/>
</dbReference>
<dbReference type="GO" id="GO:0043514">
    <property type="term" value="C:interleukin-12 complex"/>
    <property type="evidence" value="ECO:0000318"/>
    <property type="project" value="GO_Central"/>
</dbReference>
<dbReference type="GO" id="GO:0005125">
    <property type="term" value="F:cytokine activity"/>
    <property type="evidence" value="ECO:0007669"/>
    <property type="project" value="UniProtKB-KW"/>
</dbReference>
<dbReference type="GO" id="GO:0008083">
    <property type="term" value="F:growth factor activity"/>
    <property type="evidence" value="ECO:0007669"/>
    <property type="project" value="UniProtKB-KW"/>
</dbReference>
<dbReference type="GO" id="GO:0005143">
    <property type="term" value="F:interleukin-12 receptor binding"/>
    <property type="evidence" value="ECO:0000318"/>
    <property type="project" value="GO_Central"/>
</dbReference>
<dbReference type="GO" id="GO:0006955">
    <property type="term" value="P:immune response"/>
    <property type="evidence" value="ECO:0007669"/>
    <property type="project" value="InterPro"/>
</dbReference>
<dbReference type="GO" id="GO:0035722">
    <property type="term" value="P:interleukin-12-mediated signaling pathway"/>
    <property type="evidence" value="ECO:0000318"/>
    <property type="project" value="GO_Central"/>
</dbReference>
<dbReference type="FunFam" id="1.20.1250.10:FF:000020">
    <property type="entry name" value="Interleukin-12 subunit alpha"/>
    <property type="match status" value="1"/>
</dbReference>
<dbReference type="Gene3D" id="1.20.1250.10">
    <property type="match status" value="1"/>
</dbReference>
<dbReference type="InterPro" id="IPR009079">
    <property type="entry name" value="4_helix_cytokine-like_core"/>
</dbReference>
<dbReference type="InterPro" id="IPR050676">
    <property type="entry name" value="IL-12"/>
</dbReference>
<dbReference type="InterPro" id="IPR004281">
    <property type="entry name" value="IL-12_alpha"/>
</dbReference>
<dbReference type="PANTHER" id="PTHR48485:SF1">
    <property type="entry name" value="INTERLEUKIN-12 SUBUNIT ALPHA"/>
    <property type="match status" value="1"/>
</dbReference>
<dbReference type="PANTHER" id="PTHR48485">
    <property type="entry name" value="INTERLEUKIN-12 SUBUNIT BETA-RELATED"/>
    <property type="match status" value="1"/>
</dbReference>
<dbReference type="Pfam" id="PF03039">
    <property type="entry name" value="IL12"/>
    <property type="match status" value="1"/>
</dbReference>
<dbReference type="SUPFAM" id="SSF47266">
    <property type="entry name" value="4-helical cytokines"/>
    <property type="match status" value="1"/>
</dbReference>
<evidence type="ECO:0000250" key="1"/>
<evidence type="ECO:0000250" key="2">
    <source>
        <dbReference type="UniProtKB" id="P29459"/>
    </source>
</evidence>
<evidence type="ECO:0000250" key="3">
    <source>
        <dbReference type="UniProtKB" id="P43431"/>
    </source>
</evidence>
<evidence type="ECO:0000255" key="4"/>
<evidence type="ECO:0000305" key="5"/>
<name>IL12A_PIG</name>
<reference key="1">
    <citation type="journal article" date="1997" name="Vet. Immunol. Immunopathol.">
        <title>Molecular cloning and mRNA expression of porcine interleukin-12.</title>
        <authorList>
            <person name="Foss D.L."/>
            <person name="Murtaugh M.P."/>
        </authorList>
    </citation>
    <scope>NUCLEOTIDE SEQUENCE [MRNA]</scope>
    <source>
        <tissue>Peripheral blood</tissue>
    </source>
</reference>
<sequence>MCPLRNLLLVATLVLLNHLDHLSLGRSLPATTAGPGMFKCLNHSQNLLKAVSNTLQKAKQTLEFYSCTSEEIDHEDITKDKTSTVEACLPLELATNESCLAARETSLITNGNCLTSGKTSFMTTLCLSSIYEDLKMYHVEFQAMNAKLLMDPKRQIFLDQNMLTAITELMQALNFNSETVPQKPSLEELDFYKTKIKLCILLHAFRIRAVTIDRMMSYLNSS</sequence>
<organism>
    <name type="scientific">Sus scrofa</name>
    <name type="common">Pig</name>
    <dbReference type="NCBI Taxonomy" id="9823"/>
    <lineage>
        <taxon>Eukaryota</taxon>
        <taxon>Metazoa</taxon>
        <taxon>Chordata</taxon>
        <taxon>Craniata</taxon>
        <taxon>Vertebrata</taxon>
        <taxon>Euteleostomi</taxon>
        <taxon>Mammalia</taxon>
        <taxon>Eutheria</taxon>
        <taxon>Laurasiatheria</taxon>
        <taxon>Artiodactyla</taxon>
        <taxon>Suina</taxon>
        <taxon>Suidae</taxon>
        <taxon>Sus</taxon>
    </lineage>
</organism>
<feature type="signal peptide" evidence="4">
    <location>
        <begin position="1"/>
        <end position="25"/>
    </location>
</feature>
<feature type="chain" id="PRO_0000015610" description="Interleukin-12 subunit alpha">
    <location>
        <begin position="26"/>
        <end position="222"/>
    </location>
</feature>
<feature type="glycosylation site" description="N-linked (GlcNAc...) asparagine" evidence="4">
    <location>
        <position position="42"/>
    </location>
</feature>
<feature type="glycosylation site" description="N-linked (GlcNAc...) asparagine" evidence="4">
    <location>
        <position position="96"/>
    </location>
</feature>
<feature type="disulfide bond" evidence="2">
    <location>
        <begin position="40"/>
        <end position="113"/>
    </location>
</feature>
<feature type="disulfide bond" evidence="1">
    <location>
        <begin position="67"/>
        <end position="199"/>
    </location>
</feature>
<feature type="disulfide bond" evidence="1">
    <location>
        <begin position="88"/>
        <end position="126"/>
    </location>
</feature>
<feature type="disulfide bond" description="Interchain (with C-195 in IL12B)" evidence="1">
    <location>
        <position position="99"/>
    </location>
</feature>
<gene>
    <name type="primary">IL12A</name>
</gene>
<accession>Q29053</accession>
<protein>
    <recommendedName>
        <fullName>Interleukin-12 subunit alpha</fullName>
        <shortName>IL-12A</shortName>
    </recommendedName>
    <alternativeName>
        <fullName>Cytotoxic lymphocyte maturation factor 35 kDa subunit</fullName>
        <shortName>CLMF p35</shortName>
    </alternativeName>
    <alternativeName>
        <fullName>IL-12 subunit p35</fullName>
    </alternativeName>
</protein>
<proteinExistence type="evidence at transcript level"/>
<comment type="function">
    <text evidence="2 3">Heterodimerizes with IL12B to form the IL-12 cytokine or with EBI3/IL27B to form the IL-35 cytokine. IL-12 is primarily produced by professional antigen-presenting cells (APCs) such as B-cells and dendritic cells (DCs) as well as macrophages and granulocytes and regulates T-cell and natural killer-cell responses, induces the production of interferon-gamma (IFN-gamma), favors the differentiation of T-helper 1 (Th1) cells and is an important link between innate resistance and adaptive immunity. Mechanistically, exerts its biological effects through a receptor composed of IL12R1 and IL12R2 subunits. Binding to the receptor results in the rapid tyrosine phosphorylation of a number of cellular substrates including the JAK family kinases TYK2 and JAK2. In turn, recruited STAT4 gets phosphorylated and translocates to the nucleus where it regulates cytokine/growth factor responsive genes (By similarity). As part of IL-35, plays essential roles in maintaining the immune homeostasis of the liver microenvironment and also functions as an immune-suppressive cytokine (By similarity). Mediates biological events through unconventional receptors composed of IL12RB2 and gp130/IL6ST heterodimers or homodimers. Signaling requires the transcription factors STAT1 and STAT4, which form a unique heterodimer that binds to distinct DNA sites (By similarity).</text>
</comment>
<comment type="subunit">
    <text evidence="2 3">Heterodimer with IL12B; disulfide-linked. This heterodimer is known as interleukin IL-12. Heterodimer with EBI3/IL27B; not disulfide-linked. This heterodimer is known as interleukin IL-35. Interacts with NBR1; this interaction promotes IL-12 secretion (By similarity).</text>
</comment>
<comment type="subcellular location">
    <subcellularLocation>
        <location evidence="2">Secreted</location>
    </subcellularLocation>
</comment>
<comment type="similarity">
    <text evidence="5">Belongs to the IL-6 superfamily.</text>
</comment>
<comment type="sequence caution" evidence="5">
    <conflict type="erroneous initiation">
        <sequence resource="EMBL-CDS" id="AAA73897"/>
    </conflict>
</comment>
<keyword id="KW-0202">Cytokine</keyword>
<keyword id="KW-1015">Disulfide bond</keyword>
<keyword id="KW-0325">Glycoprotein</keyword>
<keyword id="KW-0339">Growth factor</keyword>
<keyword id="KW-1185">Reference proteome</keyword>
<keyword id="KW-0964">Secreted</keyword>
<keyword id="KW-0732">Signal</keyword>